<protein>
    <recommendedName>
        <fullName>F-actin-capping protein subunit alpha-2</fullName>
    </recommendedName>
    <alternativeName>
        <fullName>CapZ alpha-2</fullName>
    </alternativeName>
</protein>
<name>CAZA2_MICMU</name>
<organism>
    <name type="scientific">Microcebus murinus</name>
    <name type="common">Gray mouse lemur</name>
    <name type="synonym">Lemur murinus</name>
    <dbReference type="NCBI Taxonomy" id="30608"/>
    <lineage>
        <taxon>Eukaryota</taxon>
        <taxon>Metazoa</taxon>
        <taxon>Chordata</taxon>
        <taxon>Craniata</taxon>
        <taxon>Vertebrata</taxon>
        <taxon>Euteleostomi</taxon>
        <taxon>Mammalia</taxon>
        <taxon>Eutheria</taxon>
        <taxon>Euarchontoglires</taxon>
        <taxon>Primates</taxon>
        <taxon>Strepsirrhini</taxon>
        <taxon>Lemuriformes</taxon>
        <taxon>Cheirogaleidae</taxon>
        <taxon>Microcebus</taxon>
    </lineage>
</organism>
<reference key="1">
    <citation type="submission" date="2005-11" db="EMBL/GenBank/DDBJ databases">
        <title>NISC comparative sequencing initiative.</title>
        <authorList>
            <person name="Antonellis A."/>
            <person name="Ayele K."/>
            <person name="Benjamin B."/>
            <person name="Blakesley R.W."/>
            <person name="Boakye A."/>
            <person name="Bouffard G.G."/>
            <person name="Brinkley C."/>
            <person name="Brooks S."/>
            <person name="Chu G."/>
            <person name="Coleman H."/>
            <person name="Engle J."/>
            <person name="Gestole M."/>
            <person name="Greene A."/>
            <person name="Guan X."/>
            <person name="Gupta J."/>
            <person name="Haghighi P."/>
            <person name="Han J."/>
            <person name="Hansen N."/>
            <person name="Ho S.-L."/>
            <person name="Hu P."/>
            <person name="Hunter G."/>
            <person name="Hurle B."/>
            <person name="Idol J.R."/>
            <person name="Kwong P."/>
            <person name="Laric P."/>
            <person name="Larson S."/>
            <person name="Lee-Lin S.-Q."/>
            <person name="Legaspi R."/>
            <person name="Madden M."/>
            <person name="Maduro Q.L."/>
            <person name="Maduro V.B."/>
            <person name="Margulies E.H."/>
            <person name="Masiello C."/>
            <person name="Maskeri B."/>
            <person name="McDowell J."/>
            <person name="Mojidi H.A."/>
            <person name="Mullikin J.C."/>
            <person name="Oestreicher J.S."/>
            <person name="Park M."/>
            <person name="Portnoy M.E."/>
            <person name="Prasad A."/>
            <person name="Puri O."/>
            <person name="Reddix-Dugue N."/>
            <person name="Schandler K."/>
            <person name="Schueler M.G."/>
            <person name="Sison C."/>
            <person name="Stantripop S."/>
            <person name="Stephen E."/>
            <person name="Taye A."/>
            <person name="Thomas J.W."/>
            <person name="Thomas P.J."/>
            <person name="Tsipouri V."/>
            <person name="Ung L."/>
            <person name="Vogt J.L."/>
            <person name="Wetherby K.D."/>
            <person name="Young A."/>
            <person name="Green E.D."/>
        </authorList>
    </citation>
    <scope>NUCLEOTIDE SEQUENCE [LARGE SCALE GENOMIC DNA]</scope>
</reference>
<evidence type="ECO:0000250" key="1"/>
<evidence type="ECO:0000250" key="2">
    <source>
        <dbReference type="UniProtKB" id="P47755"/>
    </source>
</evidence>
<evidence type="ECO:0000305" key="3"/>
<comment type="function">
    <text evidence="1">F-actin-capping proteins bind in a Ca(2+)-independent manner to the fast growing ends of actin filaments (barbed end) thereby blocking the exchange of subunits at these ends. Unlike other capping proteins (such as gelsolin and severin), these proteins do not sever actin filaments (By similarity).</text>
</comment>
<comment type="subunit">
    <text evidence="1">Component of the F-actin capping complex, composed of a heterodimer of an alpha and a beta subunit. Component of the WASH complex, composed of F-actin-capping protein subunit alpha (CAPZA1, CAPZA2 or CAPZA3), F-actin-capping protein subunit beta (CAPZB), WASHC1, WASHC2, WASHC3, WASHC4 and WASHC5. Interacts with RCSD1/CAPZIP (By similarity).</text>
</comment>
<comment type="similarity">
    <text evidence="3">Belongs to the F-actin-capping protein alpha subunit family.</text>
</comment>
<gene>
    <name type="primary">CAPZA2</name>
</gene>
<dbReference type="EMBL" id="DP000022">
    <property type="protein sequence ID" value="ABB89821.1"/>
    <property type="molecule type" value="Genomic_DNA"/>
</dbReference>
<dbReference type="RefSeq" id="XP_012616530.1">
    <property type="nucleotide sequence ID" value="XM_012761076.2"/>
</dbReference>
<dbReference type="SMR" id="Q2QL88"/>
<dbReference type="Ensembl" id="ENSMICT00000068185.1">
    <property type="protein sequence ID" value="ENSMICP00000042953.1"/>
    <property type="gene ID" value="ENSMICG00000032607.2"/>
</dbReference>
<dbReference type="GeneID" id="105869361"/>
<dbReference type="KEGG" id="mmur:105869361"/>
<dbReference type="CTD" id="830"/>
<dbReference type="GeneTree" id="ENSGT00950000183119"/>
<dbReference type="OrthoDB" id="340550at2759"/>
<dbReference type="Proteomes" id="UP000694394">
    <property type="component" value="Chromosome 11"/>
</dbReference>
<dbReference type="GO" id="GO:0005903">
    <property type="term" value="C:brush border"/>
    <property type="evidence" value="ECO:0007669"/>
    <property type="project" value="Ensembl"/>
</dbReference>
<dbReference type="GO" id="GO:0030863">
    <property type="term" value="C:cortical cytoskeleton"/>
    <property type="evidence" value="ECO:0007669"/>
    <property type="project" value="Ensembl"/>
</dbReference>
<dbReference type="GO" id="GO:0008290">
    <property type="term" value="C:F-actin capping protein complex"/>
    <property type="evidence" value="ECO:0007669"/>
    <property type="project" value="Ensembl"/>
</dbReference>
<dbReference type="GO" id="GO:0016020">
    <property type="term" value="C:membrane"/>
    <property type="evidence" value="ECO:0007669"/>
    <property type="project" value="Ensembl"/>
</dbReference>
<dbReference type="GO" id="GO:0051015">
    <property type="term" value="F:actin filament binding"/>
    <property type="evidence" value="ECO:0007669"/>
    <property type="project" value="TreeGrafter"/>
</dbReference>
<dbReference type="GO" id="GO:0030036">
    <property type="term" value="P:actin cytoskeleton organization"/>
    <property type="evidence" value="ECO:0007669"/>
    <property type="project" value="TreeGrafter"/>
</dbReference>
<dbReference type="GO" id="GO:0051016">
    <property type="term" value="P:barbed-end actin filament capping"/>
    <property type="evidence" value="ECO:0007669"/>
    <property type="project" value="InterPro"/>
</dbReference>
<dbReference type="FunFam" id="3.30.1140.60:FF:000001">
    <property type="entry name" value="F-actin-capping protein subunit alpha"/>
    <property type="match status" value="1"/>
</dbReference>
<dbReference type="FunFam" id="3.90.1150.210:FF:000002">
    <property type="entry name" value="F-actin-capping protein subunit alpha"/>
    <property type="match status" value="1"/>
</dbReference>
<dbReference type="Gene3D" id="3.30.1140.60">
    <property type="entry name" value="F-actin capping protein, alpha subunit"/>
    <property type="match status" value="1"/>
</dbReference>
<dbReference type="Gene3D" id="3.90.1150.210">
    <property type="entry name" value="F-actin capping protein, beta subunit"/>
    <property type="match status" value="1"/>
</dbReference>
<dbReference type="InterPro" id="IPR002189">
    <property type="entry name" value="CapZ_alpha"/>
</dbReference>
<dbReference type="InterPro" id="IPR037282">
    <property type="entry name" value="CapZ_alpha/beta"/>
</dbReference>
<dbReference type="InterPro" id="IPR042276">
    <property type="entry name" value="CapZ_alpha/beta_2"/>
</dbReference>
<dbReference type="InterPro" id="IPR042489">
    <property type="entry name" value="CapZ_alpha_1"/>
</dbReference>
<dbReference type="InterPro" id="IPR017865">
    <property type="entry name" value="F-actin_cap_asu_CS"/>
</dbReference>
<dbReference type="PANTHER" id="PTHR10653">
    <property type="entry name" value="F-ACTIN-CAPPING PROTEIN SUBUNIT ALPHA"/>
    <property type="match status" value="1"/>
</dbReference>
<dbReference type="PANTHER" id="PTHR10653:SF2">
    <property type="entry name" value="F-ACTIN-CAPPING PROTEIN SUBUNIT ALPHA-2"/>
    <property type="match status" value="1"/>
</dbReference>
<dbReference type="Pfam" id="PF01267">
    <property type="entry name" value="F-actin_cap_A"/>
    <property type="match status" value="1"/>
</dbReference>
<dbReference type="PRINTS" id="PR00191">
    <property type="entry name" value="FACTINCAPA"/>
</dbReference>
<dbReference type="SUPFAM" id="SSF90096">
    <property type="entry name" value="Subunits of heterodimeric actin filament capping protein Capz"/>
    <property type="match status" value="1"/>
</dbReference>
<dbReference type="PROSITE" id="PS00748">
    <property type="entry name" value="F_ACTIN_CAPPING_A_1"/>
    <property type="match status" value="1"/>
</dbReference>
<dbReference type="PROSITE" id="PS00749">
    <property type="entry name" value="F_ACTIN_CAPPING_A_2"/>
    <property type="match status" value="1"/>
</dbReference>
<keyword id="KW-0007">Acetylation</keyword>
<keyword id="KW-0117">Actin capping</keyword>
<keyword id="KW-0009">Actin-binding</keyword>
<keyword id="KW-0597">Phosphoprotein</keyword>
<keyword id="KW-1185">Reference proteome</keyword>
<accession>Q2QL88</accession>
<proteinExistence type="inferred from homology"/>
<feature type="initiator methionine" description="Removed" evidence="2">
    <location>
        <position position="1"/>
    </location>
</feature>
<feature type="chain" id="PRO_0000226308" description="F-actin-capping protein subunit alpha-2">
    <location>
        <begin position="2"/>
        <end position="286"/>
    </location>
</feature>
<feature type="modified residue" description="N-acetylalanine" evidence="2">
    <location>
        <position position="2"/>
    </location>
</feature>
<feature type="modified residue" description="Phosphoserine" evidence="2">
    <location>
        <position position="9"/>
    </location>
</feature>
<sequence>MADLEEQLSDEEKVRIAAKFIIHAPPGEFNEVFNDVRLLLNNDNLLREGAAHAFAQYNLDQFTPVKIEGYEDQVLITEHGDLGNGKFLDPKNRICFKFDHLRKEATDPRPYEAENAIESWRTSVETALRAYVKEHYPNGVCTVYGKKIDGQQTIIACIESHQFQAKNFWNGRWRSEWKFTITPSTTQVVGILKIQVHYYEDGNVQLVSHKDIQDSLTVSNEVQTAREFIKIVEAAENEYQTAISENYQTMSDTTFKALRRQLPVTRTKIDWNKILSYKIGKEMQNA</sequence>